<reference key="1">
    <citation type="journal article" date="2005" name="Science">
        <title>The transcriptional landscape of the mammalian genome.</title>
        <authorList>
            <person name="Carninci P."/>
            <person name="Kasukawa T."/>
            <person name="Katayama S."/>
            <person name="Gough J."/>
            <person name="Frith M.C."/>
            <person name="Maeda N."/>
            <person name="Oyama R."/>
            <person name="Ravasi T."/>
            <person name="Lenhard B."/>
            <person name="Wells C."/>
            <person name="Kodzius R."/>
            <person name="Shimokawa K."/>
            <person name="Bajic V.B."/>
            <person name="Brenner S.E."/>
            <person name="Batalov S."/>
            <person name="Forrest A.R."/>
            <person name="Zavolan M."/>
            <person name="Davis M.J."/>
            <person name="Wilming L.G."/>
            <person name="Aidinis V."/>
            <person name="Allen J.E."/>
            <person name="Ambesi-Impiombato A."/>
            <person name="Apweiler R."/>
            <person name="Aturaliya R.N."/>
            <person name="Bailey T.L."/>
            <person name="Bansal M."/>
            <person name="Baxter L."/>
            <person name="Beisel K.W."/>
            <person name="Bersano T."/>
            <person name="Bono H."/>
            <person name="Chalk A.M."/>
            <person name="Chiu K.P."/>
            <person name="Choudhary V."/>
            <person name="Christoffels A."/>
            <person name="Clutterbuck D.R."/>
            <person name="Crowe M.L."/>
            <person name="Dalla E."/>
            <person name="Dalrymple B.P."/>
            <person name="de Bono B."/>
            <person name="Della Gatta G."/>
            <person name="di Bernardo D."/>
            <person name="Down T."/>
            <person name="Engstrom P."/>
            <person name="Fagiolini M."/>
            <person name="Faulkner G."/>
            <person name="Fletcher C.F."/>
            <person name="Fukushima T."/>
            <person name="Furuno M."/>
            <person name="Futaki S."/>
            <person name="Gariboldi M."/>
            <person name="Georgii-Hemming P."/>
            <person name="Gingeras T.R."/>
            <person name="Gojobori T."/>
            <person name="Green R.E."/>
            <person name="Gustincich S."/>
            <person name="Harbers M."/>
            <person name="Hayashi Y."/>
            <person name="Hensch T.K."/>
            <person name="Hirokawa N."/>
            <person name="Hill D."/>
            <person name="Huminiecki L."/>
            <person name="Iacono M."/>
            <person name="Ikeo K."/>
            <person name="Iwama A."/>
            <person name="Ishikawa T."/>
            <person name="Jakt M."/>
            <person name="Kanapin A."/>
            <person name="Katoh M."/>
            <person name="Kawasawa Y."/>
            <person name="Kelso J."/>
            <person name="Kitamura H."/>
            <person name="Kitano H."/>
            <person name="Kollias G."/>
            <person name="Krishnan S.P."/>
            <person name="Kruger A."/>
            <person name="Kummerfeld S.K."/>
            <person name="Kurochkin I.V."/>
            <person name="Lareau L.F."/>
            <person name="Lazarevic D."/>
            <person name="Lipovich L."/>
            <person name="Liu J."/>
            <person name="Liuni S."/>
            <person name="McWilliam S."/>
            <person name="Madan Babu M."/>
            <person name="Madera M."/>
            <person name="Marchionni L."/>
            <person name="Matsuda H."/>
            <person name="Matsuzawa S."/>
            <person name="Miki H."/>
            <person name="Mignone F."/>
            <person name="Miyake S."/>
            <person name="Morris K."/>
            <person name="Mottagui-Tabar S."/>
            <person name="Mulder N."/>
            <person name="Nakano N."/>
            <person name="Nakauchi H."/>
            <person name="Ng P."/>
            <person name="Nilsson R."/>
            <person name="Nishiguchi S."/>
            <person name="Nishikawa S."/>
            <person name="Nori F."/>
            <person name="Ohara O."/>
            <person name="Okazaki Y."/>
            <person name="Orlando V."/>
            <person name="Pang K.C."/>
            <person name="Pavan W.J."/>
            <person name="Pavesi G."/>
            <person name="Pesole G."/>
            <person name="Petrovsky N."/>
            <person name="Piazza S."/>
            <person name="Reed J."/>
            <person name="Reid J.F."/>
            <person name="Ring B.Z."/>
            <person name="Ringwald M."/>
            <person name="Rost B."/>
            <person name="Ruan Y."/>
            <person name="Salzberg S.L."/>
            <person name="Sandelin A."/>
            <person name="Schneider C."/>
            <person name="Schoenbach C."/>
            <person name="Sekiguchi K."/>
            <person name="Semple C.A."/>
            <person name="Seno S."/>
            <person name="Sessa L."/>
            <person name="Sheng Y."/>
            <person name="Shibata Y."/>
            <person name="Shimada H."/>
            <person name="Shimada K."/>
            <person name="Silva D."/>
            <person name="Sinclair B."/>
            <person name="Sperling S."/>
            <person name="Stupka E."/>
            <person name="Sugiura K."/>
            <person name="Sultana R."/>
            <person name="Takenaka Y."/>
            <person name="Taki K."/>
            <person name="Tammoja K."/>
            <person name="Tan S.L."/>
            <person name="Tang S."/>
            <person name="Taylor M.S."/>
            <person name="Tegner J."/>
            <person name="Teichmann S.A."/>
            <person name="Ueda H.R."/>
            <person name="van Nimwegen E."/>
            <person name="Verardo R."/>
            <person name="Wei C.L."/>
            <person name="Yagi K."/>
            <person name="Yamanishi H."/>
            <person name="Zabarovsky E."/>
            <person name="Zhu S."/>
            <person name="Zimmer A."/>
            <person name="Hide W."/>
            <person name="Bult C."/>
            <person name="Grimmond S.M."/>
            <person name="Teasdale R.D."/>
            <person name="Liu E.T."/>
            <person name="Brusic V."/>
            <person name="Quackenbush J."/>
            <person name="Wahlestedt C."/>
            <person name="Mattick J.S."/>
            <person name="Hume D.A."/>
            <person name="Kai C."/>
            <person name="Sasaki D."/>
            <person name="Tomaru Y."/>
            <person name="Fukuda S."/>
            <person name="Kanamori-Katayama M."/>
            <person name="Suzuki M."/>
            <person name="Aoki J."/>
            <person name="Arakawa T."/>
            <person name="Iida J."/>
            <person name="Imamura K."/>
            <person name="Itoh M."/>
            <person name="Kato T."/>
            <person name="Kawaji H."/>
            <person name="Kawagashira N."/>
            <person name="Kawashima T."/>
            <person name="Kojima M."/>
            <person name="Kondo S."/>
            <person name="Konno H."/>
            <person name="Nakano K."/>
            <person name="Ninomiya N."/>
            <person name="Nishio T."/>
            <person name="Okada M."/>
            <person name="Plessy C."/>
            <person name="Shibata K."/>
            <person name="Shiraki T."/>
            <person name="Suzuki S."/>
            <person name="Tagami M."/>
            <person name="Waki K."/>
            <person name="Watahiki A."/>
            <person name="Okamura-Oho Y."/>
            <person name="Suzuki H."/>
            <person name="Kawai J."/>
            <person name="Hayashizaki Y."/>
        </authorList>
    </citation>
    <scope>NUCLEOTIDE SEQUENCE [LARGE SCALE MRNA] (ISOFORMS 1 AND 2)</scope>
    <source>
        <strain>C57BL/6J</strain>
        <tissue>Diencephalon</tissue>
    </source>
</reference>
<reference key="2">
    <citation type="journal article" date="2009" name="PLoS Biol.">
        <title>Lineage-specific biology revealed by a finished genome assembly of the mouse.</title>
        <authorList>
            <person name="Church D.M."/>
            <person name="Goodstadt L."/>
            <person name="Hillier L.W."/>
            <person name="Zody M.C."/>
            <person name="Goldstein S."/>
            <person name="She X."/>
            <person name="Bult C.J."/>
            <person name="Agarwala R."/>
            <person name="Cherry J.L."/>
            <person name="DiCuccio M."/>
            <person name="Hlavina W."/>
            <person name="Kapustin Y."/>
            <person name="Meric P."/>
            <person name="Maglott D."/>
            <person name="Birtle Z."/>
            <person name="Marques A.C."/>
            <person name="Graves T."/>
            <person name="Zhou S."/>
            <person name="Teague B."/>
            <person name="Potamousis K."/>
            <person name="Churas C."/>
            <person name="Place M."/>
            <person name="Herschleb J."/>
            <person name="Runnheim R."/>
            <person name="Forrest D."/>
            <person name="Amos-Landgraf J."/>
            <person name="Schwartz D.C."/>
            <person name="Cheng Z."/>
            <person name="Lindblad-Toh K."/>
            <person name="Eichler E.E."/>
            <person name="Ponting C.P."/>
        </authorList>
    </citation>
    <scope>NUCLEOTIDE SEQUENCE [LARGE SCALE GENOMIC DNA]</scope>
    <source>
        <strain>C57BL/6J</strain>
    </source>
</reference>
<reference key="3">
    <citation type="submission" date="2005-07" db="EMBL/GenBank/DDBJ databases">
        <authorList>
            <person name="Mural R.J."/>
            <person name="Adams M.D."/>
            <person name="Myers E.W."/>
            <person name="Smith H.O."/>
            <person name="Venter J.C."/>
        </authorList>
    </citation>
    <scope>NUCLEOTIDE SEQUENCE [LARGE SCALE GENOMIC DNA]</scope>
</reference>
<reference key="4">
    <citation type="journal article" date="2004" name="Genome Res.">
        <title>The status, quality, and expansion of the NIH full-length cDNA project: the Mammalian Gene Collection (MGC).</title>
        <authorList>
            <consortium name="The MGC Project Team"/>
        </authorList>
    </citation>
    <scope>NUCLEOTIDE SEQUENCE [LARGE SCALE MRNA] OF 83-365 (ISOFORM 1)</scope>
    <source>
        <strain>FVB/N-3</strain>
        <tissue>Mammary tumor</tissue>
    </source>
</reference>
<reference key="5">
    <citation type="journal article" date="2010" name="Cell">
        <title>A tissue-specific atlas of mouse protein phosphorylation and expression.</title>
        <authorList>
            <person name="Huttlin E.L."/>
            <person name="Jedrychowski M.P."/>
            <person name="Elias J.E."/>
            <person name="Goswami T."/>
            <person name="Rad R."/>
            <person name="Beausoleil S.A."/>
            <person name="Villen J."/>
            <person name="Haas W."/>
            <person name="Sowa M.E."/>
            <person name="Gygi S.P."/>
        </authorList>
    </citation>
    <scope>IDENTIFICATION BY MASS SPECTROMETRY [LARGE SCALE ANALYSIS]</scope>
    <source>
        <tissue>Brain</tissue>
        <tissue>Brown adipose tissue</tissue>
        <tissue>Heart</tissue>
    </source>
</reference>
<reference key="6">
    <citation type="journal article" date="2011" name="Nat. Genet.">
        <title>Mutations in TTC19 cause mitochondrial complex III deficiency and neurological impairment in humans and flies.</title>
        <authorList>
            <person name="Ghezzi D."/>
            <person name="Arzuffi P."/>
            <person name="Zordan M."/>
            <person name="Da Re C."/>
            <person name="Lamperti C."/>
            <person name="Benna C."/>
            <person name="D'Adamo P."/>
            <person name="Diodato D."/>
            <person name="Costa R."/>
            <person name="Mariotti C."/>
            <person name="Uziel G."/>
            <person name="Smiderle C."/>
            <person name="Zeviani M."/>
        </authorList>
    </citation>
    <scope>SUBUNIT</scope>
    <scope>SUBCELLULAR LOCATION</scope>
    <scope>INTERACTION WITH UQCRC1 AND UQCRFS1</scope>
</reference>
<reference key="7">
    <citation type="journal article" date="2017" name="Mol. Cell">
        <title>TTC19 plays a husbandry role on UQCRFS1 turnover in the biogenesis of mitochondrial respiratory complex III.</title>
        <authorList>
            <person name="Bottani E."/>
            <person name="Cerutti R."/>
            <person name="Harbour M.E."/>
            <person name="Ravaglia S."/>
            <person name="Dogan S.A."/>
            <person name="Giordano C."/>
            <person name="Fearnley I.M."/>
            <person name="D'Amati G."/>
            <person name="Viscomi C."/>
            <person name="Fernandez-Vizarra E."/>
            <person name="Zeviani M."/>
        </authorList>
    </citation>
    <scope>DISRUPTION PHENOTYPE</scope>
    <scope>FUNCTION</scope>
    <scope>SUBUNIT</scope>
    <scope>INTERACTION WITH COMPLEX III</scope>
</reference>
<organism>
    <name type="scientific">Mus musculus</name>
    <name type="common">Mouse</name>
    <dbReference type="NCBI Taxonomy" id="10090"/>
    <lineage>
        <taxon>Eukaryota</taxon>
        <taxon>Metazoa</taxon>
        <taxon>Chordata</taxon>
        <taxon>Craniata</taxon>
        <taxon>Vertebrata</taxon>
        <taxon>Euteleostomi</taxon>
        <taxon>Mammalia</taxon>
        <taxon>Eutheria</taxon>
        <taxon>Euarchontoglires</taxon>
        <taxon>Glires</taxon>
        <taxon>Rodentia</taxon>
        <taxon>Myomorpha</taxon>
        <taxon>Muroidea</taxon>
        <taxon>Muridae</taxon>
        <taxon>Murinae</taxon>
        <taxon>Mus</taxon>
        <taxon>Mus</taxon>
    </lineage>
</organism>
<protein>
    <recommendedName>
        <fullName>Tetratricopeptide repeat protein 19, mitochondrial</fullName>
        <shortName>TPR repeat protein 19</shortName>
    </recommendedName>
</protein>
<proteinExistence type="evidence at protein level"/>
<dbReference type="EMBL" id="AK013368">
    <property type="protein sequence ID" value="BAB28813.2"/>
    <property type="status" value="ALT_FRAME"/>
    <property type="molecule type" value="mRNA"/>
</dbReference>
<dbReference type="EMBL" id="AK034075">
    <property type="protein sequence ID" value="BAC28572.1"/>
    <property type="molecule type" value="mRNA"/>
</dbReference>
<dbReference type="EMBL" id="AL596110">
    <property type="status" value="NOT_ANNOTATED_CDS"/>
    <property type="molecule type" value="Genomic_DNA"/>
</dbReference>
<dbReference type="EMBL" id="CH466601">
    <property type="protein sequence ID" value="EDL10340.1"/>
    <property type="status" value="ALT_SEQ"/>
    <property type="molecule type" value="Genomic_DNA"/>
</dbReference>
<dbReference type="EMBL" id="BC026866">
    <property type="protein sequence ID" value="AAH26866.1"/>
    <property type="molecule type" value="mRNA"/>
</dbReference>
<dbReference type="EMBL" id="BC037111">
    <property type="protein sequence ID" value="AAH37111.1"/>
    <property type="status" value="ALT_INIT"/>
    <property type="molecule type" value="mRNA"/>
</dbReference>
<dbReference type="CCDS" id="CCDS36177.1">
    <molecule id="Q8CC21-1"/>
</dbReference>
<dbReference type="CCDS" id="CCDS48817.1">
    <molecule id="Q8CC21-2"/>
</dbReference>
<dbReference type="RefSeq" id="NP_082636.3">
    <molecule id="Q8CC21-1"/>
    <property type="nucleotide sequence ID" value="NM_028360.2"/>
</dbReference>
<dbReference type="RefSeq" id="NP_083980.2">
    <molecule id="Q8CC21-2"/>
    <property type="nucleotide sequence ID" value="NM_029704.3"/>
</dbReference>
<dbReference type="SMR" id="Q8CC21"/>
<dbReference type="BioGRID" id="215571">
    <property type="interactions" value="1"/>
</dbReference>
<dbReference type="FunCoup" id="Q8CC21">
    <property type="interactions" value="2314"/>
</dbReference>
<dbReference type="STRING" id="10090.ENSMUSP00000054367"/>
<dbReference type="iPTMnet" id="Q8CC21"/>
<dbReference type="PhosphoSitePlus" id="Q8CC21"/>
<dbReference type="jPOST" id="Q8CC21"/>
<dbReference type="PaxDb" id="10090-ENSMUSP00000054367"/>
<dbReference type="PeptideAtlas" id="Q8CC21"/>
<dbReference type="ProteomicsDB" id="298324">
    <molecule id="Q8CC21-1"/>
</dbReference>
<dbReference type="ProteomicsDB" id="298325">
    <molecule id="Q8CC21-2"/>
</dbReference>
<dbReference type="Pumba" id="Q8CC21"/>
<dbReference type="Antibodypedia" id="13179">
    <property type="antibodies" value="79 antibodies from 20 providers"/>
</dbReference>
<dbReference type="Ensembl" id="ENSMUST00000050646.13">
    <molecule id="Q8CC21-1"/>
    <property type="protein sequence ID" value="ENSMUSP00000054367.7"/>
    <property type="gene ID" value="ENSMUSG00000042298.19"/>
</dbReference>
<dbReference type="Ensembl" id="ENSMUST00000101075.11">
    <molecule id="Q8CC21-2"/>
    <property type="protein sequence ID" value="ENSMUSP00000098636.5"/>
    <property type="gene ID" value="ENSMUSG00000042298.19"/>
</dbReference>
<dbReference type="GeneID" id="72795"/>
<dbReference type="KEGG" id="mmu:72795"/>
<dbReference type="UCSC" id="uc007jir.2">
    <molecule id="Q8CC21-1"/>
    <property type="organism name" value="mouse"/>
</dbReference>
<dbReference type="UCSC" id="uc007jis.2">
    <molecule id="Q8CC21-2"/>
    <property type="organism name" value="mouse"/>
</dbReference>
<dbReference type="AGR" id="MGI:1920045"/>
<dbReference type="CTD" id="54902"/>
<dbReference type="MGI" id="MGI:1920045">
    <property type="gene designation" value="Ttc19"/>
</dbReference>
<dbReference type="VEuPathDB" id="HostDB:ENSMUSG00000042298"/>
<dbReference type="eggNOG" id="KOG1840">
    <property type="taxonomic scope" value="Eukaryota"/>
</dbReference>
<dbReference type="GeneTree" id="ENSGT00390000009194"/>
<dbReference type="InParanoid" id="Q8CC21"/>
<dbReference type="OMA" id="ANTYYEM"/>
<dbReference type="OrthoDB" id="5986190at2759"/>
<dbReference type="PhylomeDB" id="Q8CC21"/>
<dbReference type="TreeFam" id="TF314010"/>
<dbReference type="Reactome" id="R-MMU-9865881">
    <property type="pathway name" value="Complex III assembly"/>
</dbReference>
<dbReference type="BioGRID-ORCS" id="72795">
    <property type="hits" value="2 hits in 78 CRISPR screens"/>
</dbReference>
<dbReference type="ChiTaRS" id="Ttc19">
    <property type="organism name" value="mouse"/>
</dbReference>
<dbReference type="PRO" id="PR:Q8CC21"/>
<dbReference type="Proteomes" id="UP000000589">
    <property type="component" value="Chromosome 11"/>
</dbReference>
<dbReference type="RNAct" id="Q8CC21">
    <property type="molecule type" value="protein"/>
</dbReference>
<dbReference type="Bgee" id="ENSMUSG00000042298">
    <property type="expression patterns" value="Expressed in superior frontal gyrus and 236 other cell types or tissues"/>
</dbReference>
<dbReference type="ExpressionAtlas" id="Q8CC21">
    <property type="expression patterns" value="baseline and differential"/>
</dbReference>
<dbReference type="GO" id="GO:0005743">
    <property type="term" value="C:mitochondrial inner membrane"/>
    <property type="evidence" value="ECO:0000250"/>
    <property type="project" value="UniProtKB"/>
</dbReference>
<dbReference type="GO" id="GO:0005739">
    <property type="term" value="C:mitochondrion"/>
    <property type="evidence" value="ECO:0007005"/>
    <property type="project" value="MGI"/>
</dbReference>
<dbReference type="GO" id="GO:0034551">
    <property type="term" value="P:mitochondrial respiratory chain complex III assembly"/>
    <property type="evidence" value="ECO:0000250"/>
    <property type="project" value="UniProtKB"/>
</dbReference>
<dbReference type="FunFam" id="1.25.40.10:FF:000240">
    <property type="entry name" value="Tetratricopeptide repeat protein 19, mitochondrial"/>
    <property type="match status" value="1"/>
</dbReference>
<dbReference type="Gene3D" id="1.25.40.10">
    <property type="entry name" value="Tetratricopeptide repeat domain"/>
    <property type="match status" value="1"/>
</dbReference>
<dbReference type="InterPro" id="IPR011990">
    <property type="entry name" value="TPR-like_helical_dom_sf"/>
</dbReference>
<dbReference type="InterPro" id="IPR019734">
    <property type="entry name" value="TPR_rpt"/>
</dbReference>
<dbReference type="InterPro" id="IPR040395">
    <property type="entry name" value="TTC19"/>
</dbReference>
<dbReference type="PANTHER" id="PTHR13143">
    <property type="entry name" value="TETRATRICOPEPTIDE REPEAT PROTEIN 19"/>
    <property type="match status" value="1"/>
</dbReference>
<dbReference type="PANTHER" id="PTHR13143:SF6">
    <property type="entry name" value="TETRATRICOPEPTIDE REPEAT PROTEIN 19, MITOCHONDRIAL"/>
    <property type="match status" value="1"/>
</dbReference>
<dbReference type="Pfam" id="PF13374">
    <property type="entry name" value="TPR_10"/>
    <property type="match status" value="1"/>
</dbReference>
<dbReference type="Pfam" id="PF13424">
    <property type="entry name" value="TPR_12"/>
    <property type="match status" value="1"/>
</dbReference>
<dbReference type="SMART" id="SM00028">
    <property type="entry name" value="TPR"/>
    <property type="match status" value="4"/>
</dbReference>
<dbReference type="SUPFAM" id="SSF48452">
    <property type="entry name" value="TPR-like"/>
    <property type="match status" value="1"/>
</dbReference>
<dbReference type="PROSITE" id="PS50293">
    <property type="entry name" value="TPR_REGION"/>
    <property type="match status" value="1"/>
</dbReference>
<evidence type="ECO:0000250" key="1">
    <source>
        <dbReference type="UniProtKB" id="Q6DKK2"/>
    </source>
</evidence>
<evidence type="ECO:0000255" key="2"/>
<evidence type="ECO:0000269" key="3">
    <source>
    </source>
</evidence>
<evidence type="ECO:0000269" key="4">
    <source>
    </source>
</evidence>
<evidence type="ECO:0000303" key="5">
    <source>
    </source>
</evidence>
<evidence type="ECO:0000305" key="6"/>
<keyword id="KW-0025">Alternative splicing</keyword>
<keyword id="KW-0249">Electron transport</keyword>
<keyword id="KW-0472">Membrane</keyword>
<keyword id="KW-0496">Mitochondrion</keyword>
<keyword id="KW-0999">Mitochondrion inner membrane</keyword>
<keyword id="KW-1185">Reference proteome</keyword>
<keyword id="KW-0677">Repeat</keyword>
<keyword id="KW-0679">Respiratory chain</keyword>
<keyword id="KW-0802">TPR repeat</keyword>
<keyword id="KW-0809">Transit peptide</keyword>
<keyword id="KW-0813">Transport</keyword>
<gene>
    <name type="primary">Ttc19</name>
</gene>
<accession>Q8CC21</accession>
<accession>Q5NCZ3</accession>
<accession>Q5NCZ4</accession>
<accession>Q8K1X2</accession>
<accession>Q8R0G6</accession>
<accession>Q9CYS5</accession>
<feature type="transit peptide" description="Mitochondrion" evidence="2">
    <location>
        <begin position="1"/>
        <end position="52"/>
    </location>
</feature>
<feature type="chain" id="PRO_0000106408" description="Tetratricopeptide repeat protein 19, mitochondrial">
    <location>
        <begin position="53"/>
        <end position="365"/>
    </location>
</feature>
<feature type="repeat" description="TPR 1">
    <location>
        <begin position="127"/>
        <end position="160"/>
    </location>
</feature>
<feature type="repeat" description="TPR 2">
    <location>
        <begin position="220"/>
        <end position="260"/>
    </location>
</feature>
<feature type="repeat" description="TPR 3">
    <location>
        <begin position="269"/>
        <end position="302"/>
    </location>
</feature>
<feature type="repeat" description="TPR 4">
    <location>
        <begin position="308"/>
        <end position="341"/>
    </location>
</feature>
<feature type="site" description="Cleavage; by PARL" evidence="1">
    <location>
        <begin position="70"/>
        <end position="71"/>
    </location>
</feature>
<feature type="splice variant" id="VSP_041051" description="In isoform 2." evidence="5">
    <location>
        <begin position="133"/>
        <end position="145"/>
    </location>
</feature>
<feature type="sequence conflict" description="In Ref. 1; BAB28813." evidence="6" ref="1">
    <original>L</original>
    <variation>V</variation>
    <location>
        <position position="43"/>
    </location>
</feature>
<feature type="sequence conflict" description="In Ref. 1; BAB28813." evidence="6" ref="1">
    <original>A</original>
    <variation>S</variation>
    <location>
        <position position="220"/>
    </location>
</feature>
<comment type="function">
    <text evidence="3 4">Required for the preservation of the structural and functional integrity of mitochondrial respiratory complex III by allowing the physiological turnover of the Rieske protein UQCRFS1 (PubMed:21278747, PubMed:28673544). Involved in the clearance of UQCRFS1 N-terminal fragments, which are produced upon incorporation into the complex III and whose presence is detrimental for its catalytic activity (PubMed:28673544).</text>
</comment>
<comment type="subunit">
    <text evidence="1 3 4">Binds to the mature mitochondrial complex III dimer, after the incorporation of the Rieske protein UQCRFS1 (PubMed:21278747, PubMed:28673544). Interacts with UQCRC1 and UQCRFS1 (PubMed:21278747). Interacts with ZFYVE26 and CHMP4B (By similarity).</text>
</comment>
<comment type="subcellular location">
    <subcellularLocation>
        <location evidence="3">Mitochondrion inner membrane</location>
    </subcellularLocation>
</comment>
<comment type="alternative products">
    <event type="alternative splicing"/>
    <isoform>
        <id>Q8CC21-1</id>
        <name>1</name>
        <sequence type="displayed"/>
    </isoform>
    <isoform>
        <id>Q8CC21-2</id>
        <name>2</name>
        <sequence type="described" ref="VSP_041051"/>
    </isoform>
</comment>
<comment type="PTM">
    <text evidence="1">Proteolytically cleaved by PARL.</text>
</comment>
<comment type="disruption phenotype">
    <text evidence="4">Mutant mice show progressive neurological and energy metabolic decline, decrease complex III activity, increased production of reactive oxygen species, extensive astrogliosis and accumulation of ubiquitinated proteins in neurons of the thalamus. Compatible with a Mendelian autosomal recessive trait. No evidence of embryonic lethality nor evidence of obvious neuronal loss.</text>
</comment>
<comment type="similarity">
    <text evidence="6">Belongs to the TTC19 family.</text>
</comment>
<comment type="sequence caution" evidence="6">
    <conflict type="erroneous initiation">
        <sequence resource="EMBL-CDS" id="AAH37111"/>
    </conflict>
    <text>Truncated N-terminus.</text>
</comment>
<comment type="sequence caution" evidence="6">
    <conflict type="frameshift">
        <sequence resource="EMBL-CDS" id="BAB28813"/>
    </conflict>
</comment>
<comment type="sequence caution" evidence="6">
    <conflict type="erroneous gene model prediction">
        <sequence resource="EMBL-CDS" id="EDL10340"/>
    </conflict>
</comment>
<name>TTC19_MOUSE</name>
<sequence length="365" mass="41234">MFRLLRWRLGRTLLRAAGRRCGGCTARLLPERTGDAGTGAERLRTRGAPARGHGVLPLLAALAWFSRPAATAEQPGEDASDEAEAEIIQLLKQAKLSIMKDEPEAAELILHDALRLAYESDNRKAITYTYDLMANLAFIRGQLENAEQLFKATMSYLLGGGMKQEDNAIIEISLKLANIYAAQNKQEFALAGYEFCISTLEGKIEREKELAEDIMSEETANTYLLLGMCLDSCARYLLFSKQLSQAQRMYEKALQICQEIQGERHPQTIVLMSDLATTLDAQGHFDDAYIYMQRASDLAREINHPELHMVLSNLAAILIHRERYTQAKEIYQEALKRAELKRDEVSVQHIREELAELSRKSRRLT</sequence>